<comment type="function">
    <text evidence="1">The glycine cleavage system catalyzes the degradation of glycine. The P protein binds the alpha-amino group of glycine through its pyridoxal phosphate cofactor; CO(2) is released and the remaining methylamine moiety is then transferred to the lipoamide cofactor of the H protein.</text>
</comment>
<comment type="catalytic activity">
    <reaction evidence="1">
        <text>N(6)-[(R)-lipoyl]-L-lysyl-[glycine-cleavage complex H protein] + glycine + H(+) = N(6)-[(R)-S(8)-aminomethyldihydrolipoyl]-L-lysyl-[glycine-cleavage complex H protein] + CO2</text>
        <dbReference type="Rhea" id="RHEA:24304"/>
        <dbReference type="Rhea" id="RHEA-COMP:10494"/>
        <dbReference type="Rhea" id="RHEA-COMP:10495"/>
        <dbReference type="ChEBI" id="CHEBI:15378"/>
        <dbReference type="ChEBI" id="CHEBI:16526"/>
        <dbReference type="ChEBI" id="CHEBI:57305"/>
        <dbReference type="ChEBI" id="CHEBI:83099"/>
        <dbReference type="ChEBI" id="CHEBI:83143"/>
        <dbReference type="EC" id="1.4.4.2"/>
    </reaction>
</comment>
<comment type="subunit">
    <text evidence="1">The glycine cleavage system is composed of four proteins: P, T, L and H. In this organism, the P 'protein' is a heterodimer of two subunits.</text>
</comment>
<comment type="similarity">
    <text evidence="1">Belongs to the GcvP family. N-terminal subunit subfamily.</text>
</comment>
<evidence type="ECO:0000255" key="1">
    <source>
        <dbReference type="HAMAP-Rule" id="MF_00712"/>
    </source>
</evidence>
<protein>
    <recommendedName>
        <fullName evidence="1">Probable glycine dehydrogenase (decarboxylating) subunit 1</fullName>
        <ecNumber evidence="1">1.4.4.2</ecNumber>
    </recommendedName>
    <alternativeName>
        <fullName evidence="1">Glycine cleavage system P-protein subunit 1</fullName>
    </alternativeName>
    <alternativeName>
        <fullName evidence="1">Glycine decarboxylase subunit 1</fullName>
    </alternativeName>
    <alternativeName>
        <fullName evidence="1">Glycine dehydrogenase (aminomethyl-transferring) subunit 1</fullName>
    </alternativeName>
</protein>
<reference key="1">
    <citation type="journal article" date="2001" name="DNA Res.">
        <title>Complete genome sequence of an aerobic thermoacidophilic Crenarchaeon, Sulfolobus tokodaii strain7.</title>
        <authorList>
            <person name="Kawarabayasi Y."/>
            <person name="Hino Y."/>
            <person name="Horikawa H."/>
            <person name="Jin-no K."/>
            <person name="Takahashi M."/>
            <person name="Sekine M."/>
            <person name="Baba S."/>
            <person name="Ankai A."/>
            <person name="Kosugi H."/>
            <person name="Hosoyama A."/>
            <person name="Fukui S."/>
            <person name="Nagai Y."/>
            <person name="Nishijima K."/>
            <person name="Otsuka R."/>
            <person name="Nakazawa H."/>
            <person name="Takamiya M."/>
            <person name="Kato Y."/>
            <person name="Yoshizawa T."/>
            <person name="Tanaka T."/>
            <person name="Kudoh Y."/>
            <person name="Yamazaki J."/>
            <person name="Kushida N."/>
            <person name="Oguchi A."/>
            <person name="Aoki K."/>
            <person name="Masuda S."/>
            <person name="Yanagii M."/>
            <person name="Nishimura M."/>
            <person name="Yamagishi A."/>
            <person name="Oshima T."/>
            <person name="Kikuchi H."/>
        </authorList>
    </citation>
    <scope>NUCLEOTIDE SEQUENCE [LARGE SCALE GENOMIC DNA]</scope>
    <source>
        <strain>DSM 16993 / JCM 10545 / NBRC 100140 / 7</strain>
    </source>
</reference>
<proteinExistence type="inferred from homology"/>
<feature type="chain" id="PRO_0000166990" description="Probable glycine dehydrogenase (decarboxylating) subunit 1">
    <location>
        <begin position="1"/>
        <end position="449"/>
    </location>
</feature>
<dbReference type="EC" id="1.4.4.2" evidence="1"/>
<dbReference type="EMBL" id="BA000023">
    <property type="protein sequence ID" value="BAK54484.1"/>
    <property type="molecule type" value="Genomic_DNA"/>
</dbReference>
<dbReference type="RefSeq" id="WP_010979226.1">
    <property type="nucleotide sequence ID" value="NC_003106.2"/>
</dbReference>
<dbReference type="SMR" id="Q972C1"/>
<dbReference type="STRING" id="273063.STK_12070"/>
<dbReference type="GeneID" id="1459205"/>
<dbReference type="KEGG" id="sto:STK_12070"/>
<dbReference type="PATRIC" id="fig|273063.9.peg.1364"/>
<dbReference type="eggNOG" id="arCOG00077">
    <property type="taxonomic scope" value="Archaea"/>
</dbReference>
<dbReference type="OrthoDB" id="17655at2157"/>
<dbReference type="Proteomes" id="UP000001015">
    <property type="component" value="Chromosome"/>
</dbReference>
<dbReference type="GO" id="GO:0004375">
    <property type="term" value="F:glycine dehydrogenase (decarboxylating) activity"/>
    <property type="evidence" value="ECO:0007669"/>
    <property type="project" value="UniProtKB-EC"/>
</dbReference>
<dbReference type="GO" id="GO:0019464">
    <property type="term" value="P:glycine decarboxylation via glycine cleavage system"/>
    <property type="evidence" value="ECO:0007669"/>
    <property type="project" value="UniProtKB-UniRule"/>
</dbReference>
<dbReference type="GO" id="GO:0009116">
    <property type="term" value="P:nucleoside metabolic process"/>
    <property type="evidence" value="ECO:0007669"/>
    <property type="project" value="InterPro"/>
</dbReference>
<dbReference type="CDD" id="cd00613">
    <property type="entry name" value="GDC-P"/>
    <property type="match status" value="1"/>
</dbReference>
<dbReference type="Gene3D" id="3.90.1150.10">
    <property type="entry name" value="Aspartate Aminotransferase, domain 1"/>
    <property type="match status" value="1"/>
</dbReference>
<dbReference type="Gene3D" id="3.40.640.10">
    <property type="entry name" value="Type I PLP-dependent aspartate aminotransferase-like (Major domain)"/>
    <property type="match status" value="1"/>
</dbReference>
<dbReference type="HAMAP" id="MF_00712">
    <property type="entry name" value="GcvPA"/>
    <property type="match status" value="1"/>
</dbReference>
<dbReference type="InterPro" id="IPR023010">
    <property type="entry name" value="GcvPA"/>
</dbReference>
<dbReference type="InterPro" id="IPR049315">
    <property type="entry name" value="GDC-P_N"/>
</dbReference>
<dbReference type="InterPro" id="IPR020581">
    <property type="entry name" value="GDC_P"/>
</dbReference>
<dbReference type="InterPro" id="IPR015424">
    <property type="entry name" value="PyrdxlP-dep_Trfase"/>
</dbReference>
<dbReference type="InterPro" id="IPR015421">
    <property type="entry name" value="PyrdxlP-dep_Trfase_major"/>
</dbReference>
<dbReference type="InterPro" id="IPR015422">
    <property type="entry name" value="PyrdxlP-dep_Trfase_small"/>
</dbReference>
<dbReference type="NCBIfam" id="NF001696">
    <property type="entry name" value="PRK00451.1"/>
    <property type="match status" value="1"/>
</dbReference>
<dbReference type="PANTHER" id="PTHR42806">
    <property type="entry name" value="GLYCINE CLEAVAGE SYSTEM P-PROTEIN"/>
    <property type="match status" value="1"/>
</dbReference>
<dbReference type="PANTHER" id="PTHR42806:SF1">
    <property type="entry name" value="GLYCINE DEHYDROGENASE (DECARBOXYLATING)"/>
    <property type="match status" value="1"/>
</dbReference>
<dbReference type="Pfam" id="PF02347">
    <property type="entry name" value="GDC-P"/>
    <property type="match status" value="1"/>
</dbReference>
<dbReference type="PIRSF" id="PIRSF006815">
    <property type="entry name" value="GcvPA"/>
    <property type="match status" value="1"/>
</dbReference>
<dbReference type="SUPFAM" id="SSF53383">
    <property type="entry name" value="PLP-dependent transferases"/>
    <property type="match status" value="1"/>
</dbReference>
<gene>
    <name evidence="1" type="primary">gcvPA</name>
    <name type="ordered locus">STK_12070</name>
</gene>
<organism>
    <name type="scientific">Sulfurisphaera tokodaii (strain DSM 16993 / JCM 10545 / NBRC 100140 / 7)</name>
    <name type="common">Sulfolobus tokodaii</name>
    <dbReference type="NCBI Taxonomy" id="273063"/>
    <lineage>
        <taxon>Archaea</taxon>
        <taxon>Thermoproteota</taxon>
        <taxon>Thermoprotei</taxon>
        <taxon>Sulfolobales</taxon>
        <taxon>Sulfolobaceae</taxon>
        <taxon>Sulfurisphaera</taxon>
    </lineage>
</organism>
<sequence>MDMHPWLPNIKYIEEMLKSIGVNSIDDLFIDVPEEIKLKKELDLDYKKPLSEYEIILKLQELQNKNKRLKMPPFLGGGLCPHYVPEVVKFIIKRSEFYTAYTPYQPEISQGLLQALFEYQSLIAELFEMEVVNASLYDWGSALAEAIMMANRINKKKTVLVPKLMNPYHKEVVKTWTYGKGIKLVEIPPNERGTIDVSKLESMINEDDVSAIYIQQPNFYGIFEDEIEYIVDIAKKKKIITIMGVSPLALGLIKPPGEYEIDITVGDGQELGLSLNFGGPLLGILATRWDGQLVRQMPGRIVGLTKDSEGKRGFTLILQTREQFARREKATSNITTNEALMAIAAAVYLSLLGRNGIKELAKEIYIRSHYAKKRLEELGVNTVYNGDFFEEFAVDFRTDYDIIHSRLLEKNIHGGLKLGKTQALFCVTEVHTKSMIDELIESIREVFSG</sequence>
<name>GCSPA_SULTO</name>
<accession>Q972C1</accession>
<accession>F9VNX6</accession>
<keyword id="KW-0560">Oxidoreductase</keyword>
<keyword id="KW-1185">Reference proteome</keyword>